<feature type="chain" id="PRO_0000053231" description="Hemoglobin subunit epsilon">
    <location>
        <begin position="1"/>
        <end position="147"/>
    </location>
</feature>
<feature type="domain" description="Globin" evidence="2">
    <location>
        <begin position="3"/>
        <end position="147"/>
    </location>
</feature>
<feature type="binding site" description="distal binding residue" evidence="2">
    <location>
        <position position="64"/>
    </location>
    <ligand>
        <name>heme b</name>
        <dbReference type="ChEBI" id="CHEBI:60344"/>
    </ligand>
    <ligandPart>
        <name>Fe</name>
        <dbReference type="ChEBI" id="CHEBI:18248"/>
    </ligandPart>
</feature>
<feature type="binding site" description="proximal binding residue" evidence="2">
    <location>
        <position position="93"/>
    </location>
    <ligand>
        <name>heme b</name>
        <dbReference type="ChEBI" id="CHEBI:60344"/>
    </ligand>
    <ligandPart>
        <name>Fe</name>
        <dbReference type="ChEBI" id="CHEBI:18248"/>
    </ligandPart>
</feature>
<feature type="modified residue" description="Phosphoserine" evidence="1">
    <location>
        <position position="14"/>
    </location>
</feature>
<feature type="modified residue" description="Phosphoserine" evidence="1">
    <location>
        <position position="51"/>
    </location>
</feature>
<reference key="1">
    <citation type="journal article" date="1989" name="Mol. Biol. Evol.">
        <title>A molecular view of primate phylogeny and important systematic and evolutionary questions.</title>
        <authorList>
            <person name="Koop B.F."/>
            <person name="Tagle D.A."/>
            <person name="Goodman M."/>
            <person name="Slightom J.L."/>
        </authorList>
    </citation>
    <scope>NUCLEOTIDE SEQUENCE</scope>
</reference>
<organism>
    <name type="scientific">Carlito syrichta</name>
    <name type="common">Philippine tarsier</name>
    <name type="synonym">Tarsius syrichta</name>
    <dbReference type="NCBI Taxonomy" id="1868482"/>
    <lineage>
        <taxon>Eukaryota</taxon>
        <taxon>Metazoa</taxon>
        <taxon>Chordata</taxon>
        <taxon>Craniata</taxon>
        <taxon>Vertebrata</taxon>
        <taxon>Euteleostomi</taxon>
        <taxon>Mammalia</taxon>
        <taxon>Eutheria</taxon>
        <taxon>Euarchontoglires</taxon>
        <taxon>Primates</taxon>
        <taxon>Haplorrhini</taxon>
        <taxon>Tarsiiformes</taxon>
        <taxon>Tarsiidae</taxon>
        <taxon>Carlito</taxon>
    </lineage>
</organism>
<proteinExistence type="evidence at transcript level"/>
<accession>P18435</accession>
<gene>
    <name type="primary">HBE1</name>
</gene>
<protein>
    <recommendedName>
        <fullName>Hemoglobin subunit epsilon</fullName>
    </recommendedName>
    <alternativeName>
        <fullName>Epsilon-globin</fullName>
    </alternativeName>
    <alternativeName>
        <fullName>Hemoglobin epsilon chain</fullName>
    </alternativeName>
</protein>
<comment type="function">
    <text>The epsilon chain is a beta-type chain of early mammalian embryonic hemoglobin.</text>
</comment>
<comment type="subunit">
    <text>Heterotetramer of two alpha chains and two epsilon chains in early embryonic hemoglobin Gower-2; two zeta chains and two epsilon chains in early embryonic hemoglobin Gower-1.</text>
</comment>
<comment type="tissue specificity">
    <text>Red blood cells.</text>
</comment>
<comment type="similarity">
    <text evidence="2">Belongs to the globin family.</text>
</comment>
<sequence>MVHLTAEEKSSVTSLWGKMNVDEAGGEALGRLLVVYPWTQRFFDNFGNLSSSSAIMGNPKVKAHGKKVLTSFGDAIKNMDNLKGAFAKLSELHCDKLHVDPENFRLLGNVLVIILVTHFGKDFTPEVQVAWQKLVSGVATALAHKYH</sequence>
<evidence type="ECO:0000250" key="1">
    <source>
        <dbReference type="UniProtKB" id="P02100"/>
    </source>
</evidence>
<evidence type="ECO:0000255" key="2">
    <source>
        <dbReference type="PROSITE-ProRule" id="PRU00238"/>
    </source>
</evidence>
<dbReference type="EMBL" id="M81411">
    <property type="protein sequence ID" value="AAA16712.1"/>
    <property type="molecule type" value="Unassigned_DNA"/>
</dbReference>
<dbReference type="EMBL" id="M33970">
    <property type="protein sequence ID" value="AAA36958.1"/>
    <property type="molecule type" value="Genomic_DNA"/>
</dbReference>
<dbReference type="PIR" id="I57442">
    <property type="entry name" value="I57442"/>
</dbReference>
<dbReference type="SMR" id="P18435"/>
<dbReference type="STRING" id="1868482.ENSTSYP00000017765"/>
<dbReference type="HOGENOM" id="CLU_003827_10_0_1"/>
<dbReference type="Proteomes" id="UP000189704">
    <property type="component" value="Unplaced"/>
</dbReference>
<dbReference type="GO" id="GO:0072562">
    <property type="term" value="C:blood microparticle"/>
    <property type="evidence" value="ECO:0007669"/>
    <property type="project" value="TreeGrafter"/>
</dbReference>
<dbReference type="GO" id="GO:0031838">
    <property type="term" value="C:haptoglobin-hemoglobin complex"/>
    <property type="evidence" value="ECO:0007669"/>
    <property type="project" value="TreeGrafter"/>
</dbReference>
<dbReference type="GO" id="GO:0005833">
    <property type="term" value="C:hemoglobin complex"/>
    <property type="evidence" value="ECO:0007669"/>
    <property type="project" value="InterPro"/>
</dbReference>
<dbReference type="GO" id="GO:0031720">
    <property type="term" value="F:haptoglobin binding"/>
    <property type="evidence" value="ECO:0007669"/>
    <property type="project" value="TreeGrafter"/>
</dbReference>
<dbReference type="GO" id="GO:0020037">
    <property type="term" value="F:heme binding"/>
    <property type="evidence" value="ECO:0007669"/>
    <property type="project" value="InterPro"/>
</dbReference>
<dbReference type="GO" id="GO:0031721">
    <property type="term" value="F:hemoglobin alpha binding"/>
    <property type="evidence" value="ECO:0007669"/>
    <property type="project" value="TreeGrafter"/>
</dbReference>
<dbReference type="GO" id="GO:0046872">
    <property type="term" value="F:metal ion binding"/>
    <property type="evidence" value="ECO:0007669"/>
    <property type="project" value="UniProtKB-KW"/>
</dbReference>
<dbReference type="GO" id="GO:0043177">
    <property type="term" value="F:organic acid binding"/>
    <property type="evidence" value="ECO:0007669"/>
    <property type="project" value="TreeGrafter"/>
</dbReference>
<dbReference type="GO" id="GO:0019825">
    <property type="term" value="F:oxygen binding"/>
    <property type="evidence" value="ECO:0007669"/>
    <property type="project" value="InterPro"/>
</dbReference>
<dbReference type="GO" id="GO:0005344">
    <property type="term" value="F:oxygen carrier activity"/>
    <property type="evidence" value="ECO:0007669"/>
    <property type="project" value="UniProtKB-KW"/>
</dbReference>
<dbReference type="GO" id="GO:0004601">
    <property type="term" value="F:peroxidase activity"/>
    <property type="evidence" value="ECO:0007669"/>
    <property type="project" value="TreeGrafter"/>
</dbReference>
<dbReference type="GO" id="GO:0042744">
    <property type="term" value="P:hydrogen peroxide catabolic process"/>
    <property type="evidence" value="ECO:0007669"/>
    <property type="project" value="TreeGrafter"/>
</dbReference>
<dbReference type="CDD" id="cd08925">
    <property type="entry name" value="Hb-beta-like"/>
    <property type="match status" value="1"/>
</dbReference>
<dbReference type="FunFam" id="1.10.490.10:FF:000001">
    <property type="entry name" value="Hemoglobin subunit beta"/>
    <property type="match status" value="1"/>
</dbReference>
<dbReference type="Gene3D" id="1.10.490.10">
    <property type="entry name" value="Globins"/>
    <property type="match status" value="1"/>
</dbReference>
<dbReference type="InterPro" id="IPR000971">
    <property type="entry name" value="Globin"/>
</dbReference>
<dbReference type="InterPro" id="IPR009050">
    <property type="entry name" value="Globin-like_sf"/>
</dbReference>
<dbReference type="InterPro" id="IPR012292">
    <property type="entry name" value="Globin/Proto"/>
</dbReference>
<dbReference type="InterPro" id="IPR002337">
    <property type="entry name" value="Hemoglobin_b"/>
</dbReference>
<dbReference type="InterPro" id="IPR050056">
    <property type="entry name" value="Hemoglobin_oxygen_transport"/>
</dbReference>
<dbReference type="PANTHER" id="PTHR11442">
    <property type="entry name" value="HEMOGLOBIN FAMILY MEMBER"/>
    <property type="match status" value="1"/>
</dbReference>
<dbReference type="PANTHER" id="PTHR11442:SF7">
    <property type="entry name" value="HEMOGLOBIN SUBUNIT EPSILON"/>
    <property type="match status" value="1"/>
</dbReference>
<dbReference type="Pfam" id="PF00042">
    <property type="entry name" value="Globin"/>
    <property type="match status" value="1"/>
</dbReference>
<dbReference type="PRINTS" id="PR00814">
    <property type="entry name" value="BETAHAEM"/>
</dbReference>
<dbReference type="SUPFAM" id="SSF46458">
    <property type="entry name" value="Globin-like"/>
    <property type="match status" value="1"/>
</dbReference>
<dbReference type="PROSITE" id="PS01033">
    <property type="entry name" value="GLOBIN"/>
    <property type="match status" value="1"/>
</dbReference>
<name>HBE_CARSF</name>
<keyword id="KW-0349">Heme</keyword>
<keyword id="KW-0408">Iron</keyword>
<keyword id="KW-0479">Metal-binding</keyword>
<keyword id="KW-0561">Oxygen transport</keyword>
<keyword id="KW-0597">Phosphoprotein</keyword>
<keyword id="KW-1185">Reference proteome</keyword>
<keyword id="KW-0813">Transport</keyword>